<gene>
    <name evidence="8" type="primary">M3KE1</name>
    <name evidence="9" type="ORF">BnaA03g30290D</name>
    <name evidence="9" type="ORF">GSBRNA2T00111755001</name>
</gene>
<organism evidence="9">
    <name type="scientific">Brassica napus</name>
    <name type="common">Rape</name>
    <dbReference type="NCBI Taxonomy" id="3708"/>
    <lineage>
        <taxon>Eukaryota</taxon>
        <taxon>Viridiplantae</taxon>
        <taxon>Streptophyta</taxon>
        <taxon>Embryophyta</taxon>
        <taxon>Tracheophyta</taxon>
        <taxon>Spermatophyta</taxon>
        <taxon>Magnoliopsida</taxon>
        <taxon>eudicotyledons</taxon>
        <taxon>Gunneridae</taxon>
        <taxon>Pentapetalae</taxon>
        <taxon>rosids</taxon>
        <taxon>malvids</taxon>
        <taxon>Brassicales</taxon>
        <taxon>Brassicaceae</taxon>
        <taxon>Brassiceae</taxon>
        <taxon>Brassica</taxon>
    </lineage>
</organism>
<sequence length="1299" mass="143609">MARQMTSSQFHKSKTLDNKYMLGDEIGKGAYGRVYIGLDLENGDFVAIKQVSLENIVQEDLNTIMQEIDLLKNLNHKNIVKYLGSLKTKTHLHIILEYVENGSLANIIKPNKFGPFPESLVTVYIAQVLEGLVYLHEQGVIHRDIKGANILTTKEGLVKLADFGVATKLNEADVNTHSVVGTPYWMAPEVIEMSGVCAASDIWSVGCTVIELLTCVPPYYDLQPMPALFRIVQDDSPPIPDSLSPDITDFLRQCFKKDSRQRPDAKTLLSHPWIRNSRRALQSSLRHSGTIRYMKGADSSSEKDGEGSQDIAESVSAEKVGMSKTNSKSKLGVGSFRSEKDQSSASDIGEERADSEDDIMSDQGPTLSIHDNKSSLQSSTCSISSDAKGTSQDGKSEPDGNLEMEASEGRRKASATKQVGKESSIQMQQRSHSFGPKGEDRGLRKAVKTPSSYGGNELTRFSDPPGDACLHDLFHPLNKVPEGKLNEASASTPASNANQGDSPVADGGKNDLATKLRARIAQKQMEGETGHSNDGGDLFRLMMGVLKDDVIDIDGLVFDEKASPDNLLPLQAVEFSRLVSSLRPSETEDAIVTSCQKLVAMFRHRPEQKVVFVTQHGFLPVMDLLDSPKSRVTCAVLQLINEIIKDNIDFQENACLVGLIPLVMSFAGPERDRSREIRKEAAYFLQQLCQSSSLTLQMFIACRGIPVLVGFLEADYAKYRSMVHLAIDGMWQVFKLKRSTPRNDFCRIAAKNGILLRLINTLYSLNEATLLASEGRSGQLDQHEALLSVIDHPDVLKTRPGGGEEPSNSQRSDLYQPDGDRPRSSSAALDATEDVKQHHRISISSNRTSTDKIQKLAESASNGYAVTQPEQVRPLLSLLEKEPPSRHVSGQLDYVKHIAGLEKHESILPLLRASIDTMPRYFSKTMSKKVMAIEGAASASGVLSGSGVLNARLGSDTSSGLLSHMVTTLSAEVASQYLEKVADLLLEFARADTTVKSYMCSQSLLSRLFHMFNRVEPPILLKILKCTNHLSTDPNCLESLQRADAIKHLIPNLEVKEGNLVDQIHHEVLSALFNLCKINKRRQEQAAENGIIPHLMLFVMSDSPLKQYALPLLCDMAHASRNSREQLRSHGGLDVYLSLLDDEYWSVIALDSIAVCLAQDNDNRKVEQALLKDDAIYTLVNFFQSCPERHFVHILEPFLKIITKSSRINTTLAVNGLTPLLIARLDHQDAIARLNLLKLIKAVYEHHPRPKQLIVENDLPQRLQNLIEERREGQHLGGQVLVKQMATSLLKALHINTVL</sequence>
<dbReference type="EC" id="2.7.11.1" evidence="6"/>
<dbReference type="EMBL" id="LK031800">
    <property type="protein sequence ID" value="CDX74018.1"/>
    <property type="molecule type" value="Genomic_DNA"/>
</dbReference>
<dbReference type="STRING" id="3708.A0A078CGE6"/>
<dbReference type="PaxDb" id="3708-A0A078CGE6"/>
<dbReference type="EnsemblPlants" id="CDX74018">
    <property type="protein sequence ID" value="CDX74018"/>
    <property type="gene ID" value="GSBRNA2T00111755001"/>
</dbReference>
<dbReference type="Gramene" id="CDX74018">
    <property type="protein sequence ID" value="CDX74018"/>
    <property type="gene ID" value="GSBRNA2T00111755001"/>
</dbReference>
<dbReference type="OMA" id="TMSKKVM"/>
<dbReference type="GO" id="GO:0005737">
    <property type="term" value="C:cytoplasm"/>
    <property type="evidence" value="ECO:0007669"/>
    <property type="project" value="UniProtKB-KW"/>
</dbReference>
<dbReference type="GO" id="GO:0005815">
    <property type="term" value="C:microtubule organizing center"/>
    <property type="evidence" value="ECO:0007669"/>
    <property type="project" value="UniProtKB-SubCell"/>
</dbReference>
<dbReference type="GO" id="GO:0005730">
    <property type="term" value="C:nucleolus"/>
    <property type="evidence" value="ECO:0000314"/>
    <property type="project" value="UniProtKB"/>
</dbReference>
<dbReference type="GO" id="GO:0005886">
    <property type="term" value="C:plasma membrane"/>
    <property type="evidence" value="ECO:0007669"/>
    <property type="project" value="UniProtKB-SubCell"/>
</dbReference>
<dbReference type="GO" id="GO:0005524">
    <property type="term" value="F:ATP binding"/>
    <property type="evidence" value="ECO:0007669"/>
    <property type="project" value="UniProtKB-KW"/>
</dbReference>
<dbReference type="GO" id="GO:0106310">
    <property type="term" value="F:protein serine kinase activity"/>
    <property type="evidence" value="ECO:0007669"/>
    <property type="project" value="RHEA"/>
</dbReference>
<dbReference type="GO" id="GO:0004674">
    <property type="term" value="F:protein serine/threonine kinase activity"/>
    <property type="evidence" value="ECO:0000314"/>
    <property type="project" value="UniProtKB"/>
</dbReference>
<dbReference type="GO" id="GO:0051301">
    <property type="term" value="P:cell division"/>
    <property type="evidence" value="ECO:0007669"/>
    <property type="project" value="UniProtKB-KW"/>
</dbReference>
<dbReference type="GO" id="GO:0046777">
    <property type="term" value="P:protein autophosphorylation"/>
    <property type="evidence" value="ECO:0000314"/>
    <property type="project" value="UniProtKB"/>
</dbReference>
<dbReference type="GO" id="GO:0051302">
    <property type="term" value="P:regulation of cell division"/>
    <property type="evidence" value="ECO:0000314"/>
    <property type="project" value="UniProtKB"/>
</dbReference>
<dbReference type="CDD" id="cd06627">
    <property type="entry name" value="STKc_Cdc7_like"/>
    <property type="match status" value="1"/>
</dbReference>
<dbReference type="FunFam" id="1.10.510.10:FF:000372">
    <property type="entry name" value="MAP3K epsilon protein kinase 1"/>
    <property type="match status" value="1"/>
</dbReference>
<dbReference type="FunFam" id="1.25.10.10:FF:000278">
    <property type="entry name" value="MAP3K epsilon protein kinase 1"/>
    <property type="match status" value="1"/>
</dbReference>
<dbReference type="FunFam" id="1.25.10.10:FF:000304">
    <property type="entry name" value="MAP3K epsilon protein kinase 1-like"/>
    <property type="match status" value="1"/>
</dbReference>
<dbReference type="Gene3D" id="1.25.10.10">
    <property type="entry name" value="Leucine-rich Repeat Variant"/>
    <property type="match status" value="2"/>
</dbReference>
<dbReference type="Gene3D" id="1.10.510.10">
    <property type="entry name" value="Transferase(Phosphotransferase) domain 1"/>
    <property type="match status" value="1"/>
</dbReference>
<dbReference type="InterPro" id="IPR011989">
    <property type="entry name" value="ARM-like"/>
</dbReference>
<dbReference type="InterPro" id="IPR016024">
    <property type="entry name" value="ARM-type_fold"/>
</dbReference>
<dbReference type="InterPro" id="IPR052441">
    <property type="entry name" value="Armadillo-Ser/Thr_Kinase"/>
</dbReference>
<dbReference type="InterPro" id="IPR011009">
    <property type="entry name" value="Kinase-like_dom_sf"/>
</dbReference>
<dbReference type="InterPro" id="IPR000719">
    <property type="entry name" value="Prot_kinase_dom"/>
</dbReference>
<dbReference type="InterPro" id="IPR017441">
    <property type="entry name" value="Protein_kinase_ATP_BS"/>
</dbReference>
<dbReference type="InterPro" id="IPR001245">
    <property type="entry name" value="Ser-Thr/Tyr_kinase_cat_dom"/>
</dbReference>
<dbReference type="InterPro" id="IPR008271">
    <property type="entry name" value="Ser/Thr_kinase_AS"/>
</dbReference>
<dbReference type="PANTHER" id="PTHR46618">
    <property type="entry name" value="ARMADILLO REPEAT-CONTAINING PROTEIN 3"/>
    <property type="match status" value="1"/>
</dbReference>
<dbReference type="PANTHER" id="PTHR46618:SF1">
    <property type="entry name" value="ARMADILLO REPEAT-CONTAINING PROTEIN 3"/>
    <property type="match status" value="1"/>
</dbReference>
<dbReference type="Pfam" id="PF00069">
    <property type="entry name" value="Pkinase"/>
    <property type="match status" value="1"/>
</dbReference>
<dbReference type="PRINTS" id="PR00109">
    <property type="entry name" value="TYRKINASE"/>
</dbReference>
<dbReference type="SMART" id="SM00220">
    <property type="entry name" value="S_TKc"/>
    <property type="match status" value="1"/>
</dbReference>
<dbReference type="SUPFAM" id="SSF48371">
    <property type="entry name" value="ARM repeat"/>
    <property type="match status" value="1"/>
</dbReference>
<dbReference type="SUPFAM" id="SSF56112">
    <property type="entry name" value="Protein kinase-like (PK-like)"/>
    <property type="match status" value="1"/>
</dbReference>
<dbReference type="PROSITE" id="PS00107">
    <property type="entry name" value="PROTEIN_KINASE_ATP"/>
    <property type="match status" value="1"/>
</dbReference>
<dbReference type="PROSITE" id="PS50011">
    <property type="entry name" value="PROTEIN_KINASE_DOM"/>
    <property type="match status" value="1"/>
</dbReference>
<dbReference type="PROSITE" id="PS00108">
    <property type="entry name" value="PROTEIN_KINASE_ST"/>
    <property type="match status" value="1"/>
</dbReference>
<accession>A0A078CGE6</accession>
<name>M3KE1_BRANA</name>
<feature type="chain" id="PRO_0000432226" description="MAP3K epsilon protein kinase 1">
    <location>
        <begin position="1"/>
        <end position="1299"/>
    </location>
</feature>
<feature type="domain" description="Protein kinase" evidence="4">
    <location>
        <begin position="20"/>
        <end position="274"/>
    </location>
</feature>
<feature type="repeat" description="HEAT 1" evidence="3">
    <location>
        <begin position="25"/>
        <end position="62"/>
    </location>
</feature>
<feature type="repeat" description="HEAT 2" evidence="3">
    <location>
        <begin position="86"/>
        <end position="125"/>
    </location>
</feature>
<feature type="repeat" description="HEAT 3" evidence="3">
    <location>
        <begin position="218"/>
        <end position="256"/>
    </location>
</feature>
<feature type="repeat" description="HEAT 4" evidence="3">
    <location>
        <begin position="532"/>
        <end position="570"/>
    </location>
</feature>
<feature type="repeat" description="HEAT 5" evidence="3">
    <location>
        <begin position="611"/>
        <end position="649"/>
    </location>
</feature>
<feature type="repeat" description="HEAT 6" evidence="3">
    <location>
        <begin position="653"/>
        <end position="694"/>
    </location>
</feature>
<feature type="repeat" description="HEAT 7" evidence="3">
    <location>
        <begin position="698"/>
        <end position="736"/>
    </location>
</feature>
<feature type="repeat" description="HEAT 8" evidence="3">
    <location>
        <begin position="743"/>
        <end position="780"/>
    </location>
</feature>
<feature type="repeat" description="HEAT 9" evidence="3">
    <location>
        <begin position="781"/>
        <end position="820"/>
    </location>
</feature>
<feature type="repeat" description="HEAT 10" evidence="3">
    <location>
        <begin position="868"/>
        <end position="900"/>
    </location>
</feature>
<feature type="repeat" description="HEAT 11" evidence="3">
    <location>
        <begin position="901"/>
        <end position="939"/>
    </location>
</feature>
<feature type="repeat" description="HEAT 12" evidence="3">
    <location>
        <begin position="955"/>
        <end position="994"/>
    </location>
</feature>
<feature type="repeat" description="HEAT 13" evidence="3">
    <location>
        <begin position="998"/>
        <end position="1036"/>
    </location>
</feature>
<feature type="repeat" description="HEAT 14" evidence="3">
    <location>
        <begin position="1043"/>
        <end position="1081"/>
    </location>
</feature>
<feature type="repeat" description="HEAT 15" evidence="3">
    <location>
        <begin position="1085"/>
        <end position="1122"/>
    </location>
</feature>
<feature type="repeat" description="HEAT 16" evidence="3">
    <location>
        <begin position="1125"/>
        <end position="1164"/>
    </location>
</feature>
<feature type="repeat" description="HEAT 17" evidence="3">
    <location>
        <begin position="1186"/>
        <end position="1210"/>
    </location>
</feature>
<feature type="repeat" description="HEAT 18" evidence="3">
    <location>
        <begin position="1211"/>
        <end position="1249"/>
    </location>
</feature>
<feature type="repeat" description="HEAT 19" evidence="3">
    <location>
        <begin position="1279"/>
        <end position="1299"/>
    </location>
</feature>
<feature type="region of interest" description="Disordered" evidence="5">
    <location>
        <begin position="291"/>
        <end position="458"/>
    </location>
</feature>
<feature type="region of interest" description="Disordered" evidence="5">
    <location>
        <begin position="483"/>
        <end position="509"/>
    </location>
</feature>
<feature type="region of interest" description="Disordered" evidence="5">
    <location>
        <begin position="795"/>
        <end position="852"/>
    </location>
</feature>
<feature type="compositionally biased region" description="Low complexity" evidence="5">
    <location>
        <begin position="374"/>
        <end position="385"/>
    </location>
</feature>
<feature type="compositionally biased region" description="Polar residues" evidence="5">
    <location>
        <begin position="415"/>
        <end position="432"/>
    </location>
</feature>
<feature type="compositionally biased region" description="Polar residues" evidence="5">
    <location>
        <begin position="488"/>
        <end position="501"/>
    </location>
</feature>
<feature type="active site" description="Proton acceptor" evidence="4">
    <location>
        <position position="144"/>
    </location>
</feature>
<feature type="binding site" evidence="4">
    <location>
        <begin position="26"/>
        <end position="34"/>
    </location>
    <ligand>
        <name>ATP</name>
        <dbReference type="ChEBI" id="CHEBI:30616"/>
    </ligand>
</feature>
<feature type="binding site" evidence="4">
    <location>
        <position position="49"/>
    </location>
    <ligand>
        <name>ATP</name>
        <dbReference type="ChEBI" id="CHEBI:30616"/>
    </ligand>
</feature>
<protein>
    <recommendedName>
        <fullName evidence="8">MAP3K epsilon protein kinase 1</fullName>
        <shortName evidence="8">BnM3KE1</shortName>
        <ecNumber evidence="6">2.7.11.1</ecNumber>
    </recommendedName>
</protein>
<keyword id="KW-0067">ATP-binding</keyword>
<keyword id="KW-0131">Cell cycle</keyword>
<keyword id="KW-0132">Cell division</keyword>
<keyword id="KW-1003">Cell membrane</keyword>
<keyword id="KW-0963">Cytoplasm</keyword>
<keyword id="KW-0206">Cytoskeleton</keyword>
<keyword id="KW-0418">Kinase</keyword>
<keyword id="KW-0472">Membrane</keyword>
<keyword id="KW-0547">Nucleotide-binding</keyword>
<keyword id="KW-0539">Nucleus</keyword>
<keyword id="KW-0597">Phosphoprotein</keyword>
<keyword id="KW-0677">Repeat</keyword>
<keyword id="KW-0723">Serine/threonine-protein kinase</keyword>
<keyword id="KW-0808">Transferase</keyword>
<proteinExistence type="evidence at protein level"/>
<reference key="1">
    <citation type="journal article" date="2014" name="Science">
        <title>Plant genetics. Early allopolyploid evolution in the post-Neolithic Brassica napus oilseed genome.</title>
        <authorList>
            <person name="Chalhoub B."/>
            <person name="Denoeud F."/>
            <person name="Liu S."/>
            <person name="Parkin I.A."/>
            <person name="Tang H."/>
            <person name="Wang X."/>
            <person name="Chiquet J."/>
            <person name="Belcram H."/>
            <person name="Tong C."/>
            <person name="Samans B."/>
            <person name="Correa M."/>
            <person name="Da Silva C."/>
            <person name="Just J."/>
            <person name="Falentin C."/>
            <person name="Koh C.S."/>
            <person name="Le Clainche I."/>
            <person name="Bernard M."/>
            <person name="Bento P."/>
            <person name="Noel B."/>
            <person name="Labadie K."/>
            <person name="Alberti A."/>
            <person name="Charles M."/>
            <person name="Arnaud D."/>
            <person name="Guo H."/>
            <person name="Daviaud C."/>
            <person name="Alamery S."/>
            <person name="Jabbari K."/>
            <person name="Zhao M."/>
            <person name="Edger P.P."/>
            <person name="Chelaifa H."/>
            <person name="Tack D."/>
            <person name="Lassalle G."/>
            <person name="Mestiri I."/>
            <person name="Schnel N."/>
            <person name="Le Paslier M.C."/>
            <person name="Fan G."/>
            <person name="Renault V."/>
            <person name="Bayer P.E."/>
            <person name="Golicz A.A."/>
            <person name="Manoli S."/>
            <person name="Lee T.H."/>
            <person name="Thi V.H."/>
            <person name="Chalabi S."/>
            <person name="Hu Q."/>
            <person name="Fan C."/>
            <person name="Tollenaere R."/>
            <person name="Lu Y."/>
            <person name="Battail C."/>
            <person name="Shen J."/>
            <person name="Sidebottom C.H."/>
            <person name="Wang X."/>
            <person name="Canaguier A."/>
            <person name="Chauveau A."/>
            <person name="Berard A."/>
            <person name="Deniot G."/>
            <person name="Guan M."/>
            <person name="Liu Z."/>
            <person name="Sun F."/>
            <person name="Lim Y.P."/>
            <person name="Lyons E."/>
            <person name="Town C.D."/>
            <person name="Bancroft I."/>
            <person name="Wang X."/>
            <person name="Meng J."/>
            <person name="Ma J."/>
            <person name="Pires J.C."/>
            <person name="King G.J."/>
            <person name="Brunel D."/>
            <person name="Delourme R."/>
            <person name="Renard M."/>
            <person name="Aury J.M."/>
            <person name="Adams K.L."/>
            <person name="Batley J."/>
            <person name="Snowdon R.J."/>
            <person name="Tost J."/>
            <person name="Edwards D."/>
            <person name="Zhou Y."/>
            <person name="Hua W."/>
            <person name="Sharpe A.G."/>
            <person name="Paterson A.H."/>
            <person name="Guan C."/>
            <person name="Wincker P."/>
        </authorList>
    </citation>
    <scope>NUCLEOTIDE SEQUENCE [LARGE SCALE GENOMIC DNA]</scope>
    <source>
        <strain>cv. Darmor-bzh</strain>
    </source>
</reference>
<reference key="2">
    <citation type="journal article" date="2001" name="Plant J.">
        <title>The protein kinases AtMAP3Kepsilon1 and BnMAP3Kepsilon1 are functional homologues of S. pombe cdc7p and may be involved in cell division.</title>
        <authorList>
            <person name="Jouannic S."/>
            <person name="Champion A."/>
            <person name="Segui-Simarro J.-M."/>
            <person name="Salimova E."/>
            <person name="Picaud A."/>
            <person name="Tregear J."/>
            <person name="Testillano P."/>
            <person name="Risueno M.-C."/>
            <person name="Simanis V."/>
            <person name="Kreis M."/>
            <person name="Henry Y."/>
        </authorList>
    </citation>
    <scope>FUNCTION</scope>
    <scope>TISSUE SPECIFICITY</scope>
    <scope>AUTOPHOSPHORYLATION</scope>
    <scope>CATALYTIC ACTIVITY</scope>
</reference>
<reference key="3">
    <citation type="journal article" date="2004" name="J. Cell Sci.">
        <title>AtSGP1, AtSGP2 and MAP4K alpha are nucleolar plant proteins that can complement fission yeast mutants lacking a functional SIN pathway.</title>
        <authorList>
            <person name="Champion A."/>
            <person name="Jouannic S."/>
            <person name="Guillon S."/>
            <person name="Mockaitis K."/>
            <person name="Krapp A."/>
            <person name="Picaud A."/>
            <person name="Simanis V."/>
            <person name="Kreis M."/>
            <person name="Henry Y."/>
        </authorList>
    </citation>
    <scope>FUNCTION</scope>
    <scope>INDUCTION</scope>
    <scope>SUBCELLULAR LOCATION</scope>
</reference>
<evidence type="ECO:0000250" key="1">
    <source>
        <dbReference type="UniProtKB" id="Q8T2I8"/>
    </source>
</evidence>
<evidence type="ECO:0000250" key="2">
    <source>
        <dbReference type="UniProtKB" id="Q9LJD8"/>
    </source>
</evidence>
<evidence type="ECO:0000255" key="3"/>
<evidence type="ECO:0000255" key="4">
    <source>
        <dbReference type="PROSITE-ProRule" id="PRU00159"/>
    </source>
</evidence>
<evidence type="ECO:0000256" key="5">
    <source>
        <dbReference type="SAM" id="MobiDB-lite"/>
    </source>
</evidence>
<evidence type="ECO:0000269" key="6">
    <source>
    </source>
</evidence>
<evidence type="ECO:0000269" key="7">
    <source>
    </source>
</evidence>
<evidence type="ECO:0000303" key="8">
    <source>
    </source>
</evidence>
<evidence type="ECO:0000312" key="9">
    <source>
        <dbReference type="EMBL" id="CDX74018.1"/>
    </source>
</evidence>
<comment type="function">
    <text evidence="2 6">Serine/threonine-protein kinase involved in the spatial and temporal control system organizing cortical activities in mitotic and postmitotic cells (PubMed:11489177). Required for the normal functioning of the plasma membrane in developing pollen. Involved in the regulation of cell expansion and embryo development (By similarity).</text>
</comment>
<comment type="catalytic activity">
    <reaction evidence="6">
        <text>L-seryl-[protein] + ATP = O-phospho-L-seryl-[protein] + ADP + H(+)</text>
        <dbReference type="Rhea" id="RHEA:17989"/>
        <dbReference type="Rhea" id="RHEA-COMP:9863"/>
        <dbReference type="Rhea" id="RHEA-COMP:11604"/>
        <dbReference type="ChEBI" id="CHEBI:15378"/>
        <dbReference type="ChEBI" id="CHEBI:29999"/>
        <dbReference type="ChEBI" id="CHEBI:30616"/>
        <dbReference type="ChEBI" id="CHEBI:83421"/>
        <dbReference type="ChEBI" id="CHEBI:456216"/>
        <dbReference type="EC" id="2.7.11.1"/>
    </reaction>
</comment>
<comment type="catalytic activity">
    <reaction evidence="6">
        <text>L-threonyl-[protein] + ATP = O-phospho-L-threonyl-[protein] + ADP + H(+)</text>
        <dbReference type="Rhea" id="RHEA:46608"/>
        <dbReference type="Rhea" id="RHEA-COMP:11060"/>
        <dbReference type="Rhea" id="RHEA-COMP:11605"/>
        <dbReference type="ChEBI" id="CHEBI:15378"/>
        <dbReference type="ChEBI" id="CHEBI:30013"/>
        <dbReference type="ChEBI" id="CHEBI:30616"/>
        <dbReference type="ChEBI" id="CHEBI:61977"/>
        <dbReference type="ChEBI" id="CHEBI:456216"/>
        <dbReference type="EC" id="2.7.11.1"/>
    </reaction>
</comment>
<comment type="subcellular location">
    <subcellularLocation>
        <location evidence="1">Cytoplasm</location>
        <location evidence="1">Cytoskeleton</location>
        <location evidence="1">Microtubule organizing center</location>
    </subcellularLocation>
    <subcellularLocation>
        <location evidence="7">Nucleus</location>
        <location evidence="7">Nucleolus</location>
    </subcellularLocation>
    <subcellularLocation>
        <location evidence="2">Cell membrane</location>
    </subcellularLocation>
    <text evidence="2 7">Accumulates in the nucleolus during interphase (PubMed:15292395). Localized to the plasma membrane in developing pollen grains (By similarity).</text>
</comment>
<comment type="tissue specificity">
    <text evidence="6">Expressed in both the sporophytic and the gametophytic tissues, especially in dividing cells.</text>
</comment>
<comment type="induction">
    <text evidence="2">Expression is cell cycle-regulated, with higher expression in G2-M phases.</text>
</comment>
<comment type="PTM">
    <text evidence="6">Autophosphorylated.</text>
</comment>
<comment type="similarity">
    <text evidence="4">Belongs to the protein kinase superfamily. Ser/Thr protein kinase family.</text>
</comment>